<protein>
    <recommendedName>
        <fullName evidence="1">Elongation factor Ts</fullName>
        <shortName evidence="1">EF-Ts</shortName>
    </recommendedName>
</protein>
<sequence length="278" mass="31000">MSISPQEVKKLRDATGAGFGDCKKALSVAGGDFELAKKKLKEMGIVSADKRSGRDAKEGRVFSYVNTERVGLLLIACETDFVAMNSDFVAFGNSLIKQLVESGRDILDEHQELEIKNLAATIKENIYVSKVYISNIASNELVKNYLHGDHSKIGVFVKFKIDDVLKMQDEKLNNFAMDLALHVAAFSPLYLSVNDICLNYIKEQEEIFMRQMESSGKPENVVKGIISGKLKKHLGEIALLEQGFVKDDKLTVKEKIEEVSKLILSKIEVVEFKYLSVG</sequence>
<gene>
    <name evidence="1" type="primary">tsf</name>
    <name type="ordered locus">BDU_125</name>
</gene>
<organism>
    <name type="scientific">Borrelia duttonii (strain Ly)</name>
    <dbReference type="NCBI Taxonomy" id="412419"/>
    <lineage>
        <taxon>Bacteria</taxon>
        <taxon>Pseudomonadati</taxon>
        <taxon>Spirochaetota</taxon>
        <taxon>Spirochaetia</taxon>
        <taxon>Spirochaetales</taxon>
        <taxon>Borreliaceae</taxon>
        <taxon>Borrelia</taxon>
    </lineage>
</organism>
<evidence type="ECO:0000255" key="1">
    <source>
        <dbReference type="HAMAP-Rule" id="MF_00050"/>
    </source>
</evidence>
<proteinExistence type="inferred from homology"/>
<keyword id="KW-0963">Cytoplasm</keyword>
<keyword id="KW-0251">Elongation factor</keyword>
<keyword id="KW-0648">Protein biosynthesis</keyword>
<comment type="function">
    <text evidence="1">Associates with the EF-Tu.GDP complex and induces the exchange of GDP to GTP. It remains bound to the aminoacyl-tRNA.EF-Tu.GTP complex up to the GTP hydrolysis stage on the ribosome.</text>
</comment>
<comment type="subcellular location">
    <subcellularLocation>
        <location evidence="1">Cytoplasm</location>
    </subcellularLocation>
</comment>
<comment type="similarity">
    <text evidence="1">Belongs to the EF-Ts family.</text>
</comment>
<name>EFTS_BORDL</name>
<feature type="chain" id="PRO_1000116696" description="Elongation factor Ts">
    <location>
        <begin position="1"/>
        <end position="278"/>
    </location>
</feature>
<feature type="region of interest" description="Involved in Mg(2+) ion dislocation from EF-Tu" evidence="1">
    <location>
        <begin position="79"/>
        <end position="82"/>
    </location>
</feature>
<accession>B5RLJ6</accession>
<reference key="1">
    <citation type="journal article" date="2008" name="PLoS Genet.">
        <title>The genome of Borrelia recurrentis, the agent of deadly louse-borne relapsing fever, is a degraded subset of tick-borne Borrelia duttonii.</title>
        <authorList>
            <person name="Lescot M."/>
            <person name="Audic S."/>
            <person name="Robert C."/>
            <person name="Nguyen T.T."/>
            <person name="Blanc G."/>
            <person name="Cutler S.J."/>
            <person name="Wincker P."/>
            <person name="Couloux A."/>
            <person name="Claverie J.-M."/>
            <person name="Raoult D."/>
            <person name="Drancourt M."/>
        </authorList>
    </citation>
    <scope>NUCLEOTIDE SEQUENCE [LARGE SCALE GENOMIC DNA]</scope>
    <source>
        <strain>Ly</strain>
    </source>
</reference>
<dbReference type="EMBL" id="CP000976">
    <property type="protein sequence ID" value="ACH93081.1"/>
    <property type="molecule type" value="Genomic_DNA"/>
</dbReference>
<dbReference type="RefSeq" id="WP_012537893.1">
    <property type="nucleotide sequence ID" value="NC_011229.1"/>
</dbReference>
<dbReference type="SMR" id="B5RLJ6"/>
<dbReference type="STRING" id="412419.BDU_125"/>
<dbReference type="KEGG" id="bdu:BDU_125"/>
<dbReference type="eggNOG" id="COG0264">
    <property type="taxonomic scope" value="Bacteria"/>
</dbReference>
<dbReference type="HOGENOM" id="CLU_047155_0_0_12"/>
<dbReference type="OrthoDB" id="9808348at2"/>
<dbReference type="Proteomes" id="UP000000611">
    <property type="component" value="Chromosome"/>
</dbReference>
<dbReference type="GO" id="GO:0005737">
    <property type="term" value="C:cytoplasm"/>
    <property type="evidence" value="ECO:0007669"/>
    <property type="project" value="UniProtKB-SubCell"/>
</dbReference>
<dbReference type="GO" id="GO:0003746">
    <property type="term" value="F:translation elongation factor activity"/>
    <property type="evidence" value="ECO:0007669"/>
    <property type="project" value="UniProtKB-UniRule"/>
</dbReference>
<dbReference type="CDD" id="cd14275">
    <property type="entry name" value="UBA_EF-Ts"/>
    <property type="match status" value="1"/>
</dbReference>
<dbReference type="FunFam" id="1.10.8.10:FF:000001">
    <property type="entry name" value="Elongation factor Ts"/>
    <property type="match status" value="1"/>
</dbReference>
<dbReference type="Gene3D" id="1.10.286.20">
    <property type="match status" value="1"/>
</dbReference>
<dbReference type="Gene3D" id="1.10.8.10">
    <property type="entry name" value="DNA helicase RuvA subunit, C-terminal domain"/>
    <property type="match status" value="1"/>
</dbReference>
<dbReference type="Gene3D" id="3.30.479.20">
    <property type="entry name" value="Elongation factor Ts, dimerisation domain"/>
    <property type="match status" value="2"/>
</dbReference>
<dbReference type="HAMAP" id="MF_00050">
    <property type="entry name" value="EF_Ts"/>
    <property type="match status" value="1"/>
</dbReference>
<dbReference type="InterPro" id="IPR036402">
    <property type="entry name" value="EF-Ts_dimer_sf"/>
</dbReference>
<dbReference type="InterPro" id="IPR001816">
    <property type="entry name" value="Transl_elong_EFTs/EF1B"/>
</dbReference>
<dbReference type="InterPro" id="IPR014039">
    <property type="entry name" value="Transl_elong_EFTs/EF1B_dimer"/>
</dbReference>
<dbReference type="InterPro" id="IPR018101">
    <property type="entry name" value="Transl_elong_Ts_CS"/>
</dbReference>
<dbReference type="InterPro" id="IPR009060">
    <property type="entry name" value="UBA-like_sf"/>
</dbReference>
<dbReference type="NCBIfam" id="TIGR00116">
    <property type="entry name" value="tsf"/>
    <property type="match status" value="1"/>
</dbReference>
<dbReference type="PANTHER" id="PTHR11741">
    <property type="entry name" value="ELONGATION FACTOR TS"/>
    <property type="match status" value="1"/>
</dbReference>
<dbReference type="PANTHER" id="PTHR11741:SF0">
    <property type="entry name" value="ELONGATION FACTOR TS, MITOCHONDRIAL"/>
    <property type="match status" value="1"/>
</dbReference>
<dbReference type="Pfam" id="PF00889">
    <property type="entry name" value="EF_TS"/>
    <property type="match status" value="1"/>
</dbReference>
<dbReference type="SUPFAM" id="SSF54713">
    <property type="entry name" value="Elongation factor Ts (EF-Ts), dimerisation domain"/>
    <property type="match status" value="1"/>
</dbReference>
<dbReference type="SUPFAM" id="SSF46934">
    <property type="entry name" value="UBA-like"/>
    <property type="match status" value="1"/>
</dbReference>
<dbReference type="PROSITE" id="PS01126">
    <property type="entry name" value="EF_TS_1"/>
    <property type="match status" value="1"/>
</dbReference>